<reference key="1">
    <citation type="submission" date="2005-10" db="EMBL/GenBank/DDBJ databases">
        <authorList>
            <consortium name="NIH - Mammalian Gene Collection (MGC) project"/>
        </authorList>
    </citation>
    <scope>NUCLEOTIDE SEQUENCE [LARGE SCALE MRNA]</scope>
    <source>
        <strain>Crossbred X Angus</strain>
        <tissue>Liver</tissue>
    </source>
</reference>
<gene>
    <name type="primary">CZIB</name>
</gene>
<dbReference type="EMBL" id="BC108240">
    <property type="protein sequence ID" value="AAI08241.1"/>
    <property type="molecule type" value="mRNA"/>
</dbReference>
<dbReference type="RefSeq" id="NP_001033219.1">
    <property type="nucleotide sequence ID" value="NM_001038130.2"/>
</dbReference>
<dbReference type="SMR" id="Q32P66"/>
<dbReference type="FunCoup" id="Q32P66">
    <property type="interactions" value="3318"/>
</dbReference>
<dbReference type="STRING" id="9913.ENSBTAP00000060130"/>
<dbReference type="PaxDb" id="9913-ENSBTAP00000004526"/>
<dbReference type="GeneID" id="517857"/>
<dbReference type="KEGG" id="bta:517857"/>
<dbReference type="CTD" id="54987"/>
<dbReference type="eggNOG" id="KOG1296">
    <property type="taxonomic scope" value="Eukaryota"/>
</dbReference>
<dbReference type="InParanoid" id="Q32P66"/>
<dbReference type="OrthoDB" id="10248838at2759"/>
<dbReference type="Proteomes" id="UP000009136">
    <property type="component" value="Unplaced"/>
</dbReference>
<dbReference type="GO" id="GO:0008270">
    <property type="term" value="F:zinc ion binding"/>
    <property type="evidence" value="ECO:0000250"/>
    <property type="project" value="UniProtKB"/>
</dbReference>
<dbReference type="InterPro" id="IPR008584">
    <property type="entry name" value="CXXC_Zn-binding_euk"/>
</dbReference>
<dbReference type="PANTHER" id="PTHR12857">
    <property type="entry name" value="CXXC MOTIF CONTAINING ZINC BINDING PROTEIN"/>
    <property type="match status" value="1"/>
</dbReference>
<dbReference type="PANTHER" id="PTHR12857:SF0">
    <property type="entry name" value="CXXC MOTIF CONTAINING ZINC BINDING PROTEIN"/>
    <property type="match status" value="1"/>
</dbReference>
<dbReference type="Pfam" id="PF05907">
    <property type="entry name" value="CXXC_Zn-b_euk"/>
    <property type="match status" value="1"/>
</dbReference>
<dbReference type="SUPFAM" id="SSF141678">
    <property type="entry name" value="MAL13P1.257-like"/>
    <property type="match status" value="1"/>
</dbReference>
<evidence type="ECO:0000250" key="1">
    <source>
        <dbReference type="UniProtKB" id="Q9NWV4"/>
    </source>
</evidence>
<evidence type="ECO:0000305" key="2"/>
<accession>Q32P66</accession>
<protein>
    <recommendedName>
        <fullName evidence="2">CXXC motif containing zinc binding protein</fullName>
    </recommendedName>
    <alternativeName>
        <fullName>UPF0587 protein C1orf123 homolog</fullName>
    </alternativeName>
</protein>
<proteinExistence type="evidence at transcript level"/>
<comment type="subunit">
    <text evidence="1">Monomer.</text>
</comment>
<comment type="domain">
    <text evidence="1">The N-terminal and the C-terminal half of the protein have a very similar 3D-structure, suggesting they arose from duplication. Requires a bound zinc ion for normal folding and solubility.</text>
</comment>
<comment type="similarity">
    <text evidence="2">Belongs to the UPF0587 family.</text>
</comment>
<sequence length="160" mass="18155">MGKIELQLKATLENVTNLRPVGEDFRWYLKMKCGNCGEISEKWQYIRLMDSVALKGGRGSASMVQKCKLCSRENSIEILSSTIKSYNAEDNEKFKTIVEFECRGLEPVDFQPQAGFAAEGVESGTVFSDINLQEKDWTDYDEKAQESVGIYEVTHQFVKC</sequence>
<feature type="chain" id="PRO_0000264150" description="CXXC motif containing zinc binding protein">
    <location>
        <begin position="1"/>
        <end position="160"/>
    </location>
</feature>
<feature type="binding site" evidence="1">
    <location>
        <position position="33"/>
    </location>
    <ligand>
        <name>Zn(2+)</name>
        <dbReference type="ChEBI" id="CHEBI:29105"/>
    </ligand>
</feature>
<feature type="binding site" evidence="1">
    <location>
        <position position="36"/>
    </location>
    <ligand>
        <name>Zn(2+)</name>
        <dbReference type="ChEBI" id="CHEBI:29105"/>
    </ligand>
</feature>
<feature type="binding site" evidence="1">
    <location>
        <position position="67"/>
    </location>
    <ligand>
        <name>Zn(2+)</name>
        <dbReference type="ChEBI" id="CHEBI:29105"/>
    </ligand>
</feature>
<feature type="binding site" evidence="1">
    <location>
        <position position="70"/>
    </location>
    <ligand>
        <name>Zn(2+)</name>
        <dbReference type="ChEBI" id="CHEBI:29105"/>
    </ligand>
</feature>
<feature type="modified residue" description="Phosphoserine" evidence="1">
    <location>
        <position position="75"/>
    </location>
</feature>
<name>CZIB_BOVIN</name>
<keyword id="KW-0479">Metal-binding</keyword>
<keyword id="KW-0597">Phosphoprotein</keyword>
<keyword id="KW-1185">Reference proteome</keyword>
<keyword id="KW-0862">Zinc</keyword>
<organism>
    <name type="scientific">Bos taurus</name>
    <name type="common">Bovine</name>
    <dbReference type="NCBI Taxonomy" id="9913"/>
    <lineage>
        <taxon>Eukaryota</taxon>
        <taxon>Metazoa</taxon>
        <taxon>Chordata</taxon>
        <taxon>Craniata</taxon>
        <taxon>Vertebrata</taxon>
        <taxon>Euteleostomi</taxon>
        <taxon>Mammalia</taxon>
        <taxon>Eutheria</taxon>
        <taxon>Laurasiatheria</taxon>
        <taxon>Artiodactyla</taxon>
        <taxon>Ruminantia</taxon>
        <taxon>Pecora</taxon>
        <taxon>Bovidae</taxon>
        <taxon>Bovinae</taxon>
        <taxon>Bos</taxon>
    </lineage>
</organism>